<evidence type="ECO:0000250" key="1"/>
<evidence type="ECO:0000255" key="2"/>
<evidence type="ECO:0000305" key="3"/>
<dbReference type="EC" id="2.7.1.48"/>
<dbReference type="EMBL" id="AE014075">
    <property type="protein sequence ID" value="AAN81049.1"/>
    <property type="status" value="ALT_INIT"/>
    <property type="molecule type" value="Genomic_DNA"/>
</dbReference>
<dbReference type="RefSeq" id="WP_001295424.1">
    <property type="nucleotide sequence ID" value="NZ_CP051263.1"/>
</dbReference>
<dbReference type="SMR" id="P0A8F5"/>
<dbReference type="STRING" id="199310.c2593"/>
<dbReference type="GeneID" id="93775125"/>
<dbReference type="KEGG" id="ecc:c2593"/>
<dbReference type="eggNOG" id="COG0572">
    <property type="taxonomic scope" value="Bacteria"/>
</dbReference>
<dbReference type="HOGENOM" id="CLU_021278_1_2_6"/>
<dbReference type="UniPathway" id="UPA00574">
    <property type="reaction ID" value="UER00637"/>
</dbReference>
<dbReference type="UniPathway" id="UPA00579">
    <property type="reaction ID" value="UER00640"/>
</dbReference>
<dbReference type="Proteomes" id="UP000001410">
    <property type="component" value="Chromosome"/>
</dbReference>
<dbReference type="GO" id="GO:0005737">
    <property type="term" value="C:cytoplasm"/>
    <property type="evidence" value="ECO:0007669"/>
    <property type="project" value="UniProtKB-SubCell"/>
</dbReference>
<dbReference type="GO" id="GO:0005524">
    <property type="term" value="F:ATP binding"/>
    <property type="evidence" value="ECO:0007669"/>
    <property type="project" value="UniProtKB-UniRule"/>
</dbReference>
<dbReference type="GO" id="GO:0043771">
    <property type="term" value="F:cytidine kinase activity"/>
    <property type="evidence" value="ECO:0007669"/>
    <property type="project" value="RHEA"/>
</dbReference>
<dbReference type="GO" id="GO:0004849">
    <property type="term" value="F:uridine kinase activity"/>
    <property type="evidence" value="ECO:0007669"/>
    <property type="project" value="UniProtKB-UniRule"/>
</dbReference>
<dbReference type="GO" id="GO:0044211">
    <property type="term" value="P:CTP salvage"/>
    <property type="evidence" value="ECO:0007669"/>
    <property type="project" value="UniProtKB-UniRule"/>
</dbReference>
<dbReference type="GO" id="GO:0044206">
    <property type="term" value="P:UMP salvage"/>
    <property type="evidence" value="ECO:0007669"/>
    <property type="project" value="UniProtKB-UniRule"/>
</dbReference>
<dbReference type="CDD" id="cd02023">
    <property type="entry name" value="UMPK"/>
    <property type="match status" value="1"/>
</dbReference>
<dbReference type="FunFam" id="3.40.50.300:FF:000252">
    <property type="entry name" value="Uridine kinase"/>
    <property type="match status" value="1"/>
</dbReference>
<dbReference type="Gene3D" id="3.40.50.300">
    <property type="entry name" value="P-loop containing nucleotide triphosphate hydrolases"/>
    <property type="match status" value="1"/>
</dbReference>
<dbReference type="HAMAP" id="MF_00551">
    <property type="entry name" value="Uridine_kinase"/>
    <property type="match status" value="1"/>
</dbReference>
<dbReference type="InterPro" id="IPR027417">
    <property type="entry name" value="P-loop_NTPase"/>
</dbReference>
<dbReference type="InterPro" id="IPR006083">
    <property type="entry name" value="PRK/URK"/>
</dbReference>
<dbReference type="InterPro" id="IPR026008">
    <property type="entry name" value="Uridine_kinase"/>
</dbReference>
<dbReference type="InterPro" id="IPR000764">
    <property type="entry name" value="Uridine_kinase-like"/>
</dbReference>
<dbReference type="NCBIfam" id="NF004018">
    <property type="entry name" value="PRK05480.1"/>
    <property type="match status" value="1"/>
</dbReference>
<dbReference type="NCBIfam" id="TIGR00235">
    <property type="entry name" value="udk"/>
    <property type="match status" value="1"/>
</dbReference>
<dbReference type="PANTHER" id="PTHR10285">
    <property type="entry name" value="URIDINE KINASE"/>
    <property type="match status" value="1"/>
</dbReference>
<dbReference type="Pfam" id="PF00485">
    <property type="entry name" value="PRK"/>
    <property type="match status" value="1"/>
</dbReference>
<dbReference type="PRINTS" id="PR00988">
    <property type="entry name" value="URIDINKINASE"/>
</dbReference>
<dbReference type="SUPFAM" id="SSF52540">
    <property type="entry name" value="P-loop containing nucleoside triphosphate hydrolases"/>
    <property type="match status" value="1"/>
</dbReference>
<name>URK_ECOL6</name>
<comment type="catalytic activity">
    <reaction>
        <text>uridine + ATP = UMP + ADP + H(+)</text>
        <dbReference type="Rhea" id="RHEA:16825"/>
        <dbReference type="ChEBI" id="CHEBI:15378"/>
        <dbReference type="ChEBI" id="CHEBI:16704"/>
        <dbReference type="ChEBI" id="CHEBI:30616"/>
        <dbReference type="ChEBI" id="CHEBI:57865"/>
        <dbReference type="ChEBI" id="CHEBI:456216"/>
        <dbReference type="EC" id="2.7.1.48"/>
    </reaction>
</comment>
<comment type="catalytic activity">
    <reaction>
        <text>cytidine + ATP = CMP + ADP + H(+)</text>
        <dbReference type="Rhea" id="RHEA:24674"/>
        <dbReference type="ChEBI" id="CHEBI:15378"/>
        <dbReference type="ChEBI" id="CHEBI:17562"/>
        <dbReference type="ChEBI" id="CHEBI:30616"/>
        <dbReference type="ChEBI" id="CHEBI:60377"/>
        <dbReference type="ChEBI" id="CHEBI:456216"/>
        <dbReference type="EC" id="2.7.1.48"/>
    </reaction>
</comment>
<comment type="pathway">
    <text>Pyrimidine metabolism; CTP biosynthesis via salvage pathway; CTP from cytidine: step 1/3.</text>
</comment>
<comment type="pathway">
    <text>Pyrimidine metabolism; UMP biosynthesis via salvage pathway; UMP from uridine: step 1/1.</text>
</comment>
<comment type="subunit">
    <text evidence="1">Homotetramer.</text>
</comment>
<comment type="subcellular location">
    <subcellularLocation>
        <location evidence="1">Cytoplasm</location>
    </subcellularLocation>
</comment>
<comment type="similarity">
    <text evidence="3">Belongs to the uridine kinase family.</text>
</comment>
<comment type="sequence caution" evidence="3">
    <conflict type="erroneous initiation">
        <sequence resource="EMBL-CDS" id="AAN81049"/>
    </conflict>
</comment>
<accession>P0A8F5</accession>
<accession>P31218</accession>
<accession>P78085</accession>
<accession>Q8X7L3</accession>
<proteinExistence type="inferred from homology"/>
<sequence length="213" mass="24353">MTDQSHQCVIIGIAGASASGKSLIASTLYRELREQVGDEHIGVIPEDCYYKDQSHLSMEERVKTNYDHPSAMDHSLLLEHLQALKRGSAIDLPVYSYVEHTRMKETVTVEPKKVIILEGILLLTDARLRDELNFSIFVDTPLDICLMRRIKRDVNERGRSMDSVMAQYQKTVRPMFLQFIEPSKQYADIIVPRGGKNRIAIDILKAKISQFFE</sequence>
<reference key="1">
    <citation type="journal article" date="2002" name="Proc. Natl. Acad. Sci. U.S.A.">
        <title>Extensive mosaic structure revealed by the complete genome sequence of uropathogenic Escherichia coli.</title>
        <authorList>
            <person name="Welch R.A."/>
            <person name="Burland V."/>
            <person name="Plunkett G. III"/>
            <person name="Redford P."/>
            <person name="Roesch P."/>
            <person name="Rasko D."/>
            <person name="Buckles E.L."/>
            <person name="Liou S.-R."/>
            <person name="Boutin A."/>
            <person name="Hackett J."/>
            <person name="Stroud D."/>
            <person name="Mayhew G.F."/>
            <person name="Rose D.J."/>
            <person name="Zhou S."/>
            <person name="Schwartz D.C."/>
            <person name="Perna N.T."/>
            <person name="Mobley H.L.T."/>
            <person name="Donnenberg M.S."/>
            <person name="Blattner F.R."/>
        </authorList>
    </citation>
    <scope>NUCLEOTIDE SEQUENCE [LARGE SCALE GENOMIC DNA]</scope>
    <source>
        <strain>CFT073 / ATCC 700928 / UPEC</strain>
    </source>
</reference>
<feature type="chain" id="PRO_0000164471" description="Uridine kinase">
    <location>
        <begin position="1"/>
        <end position="213"/>
    </location>
</feature>
<feature type="binding site" evidence="2">
    <location>
        <begin position="15"/>
        <end position="22"/>
    </location>
    <ligand>
        <name>ATP</name>
        <dbReference type="ChEBI" id="CHEBI:30616"/>
    </ligand>
</feature>
<organism>
    <name type="scientific">Escherichia coli O6:H1 (strain CFT073 / ATCC 700928 / UPEC)</name>
    <dbReference type="NCBI Taxonomy" id="199310"/>
    <lineage>
        <taxon>Bacteria</taxon>
        <taxon>Pseudomonadati</taxon>
        <taxon>Pseudomonadota</taxon>
        <taxon>Gammaproteobacteria</taxon>
        <taxon>Enterobacterales</taxon>
        <taxon>Enterobacteriaceae</taxon>
        <taxon>Escherichia</taxon>
    </lineage>
</organism>
<keyword id="KW-0067">ATP-binding</keyword>
<keyword id="KW-0963">Cytoplasm</keyword>
<keyword id="KW-0418">Kinase</keyword>
<keyword id="KW-0547">Nucleotide-binding</keyword>
<keyword id="KW-1185">Reference proteome</keyword>
<keyword id="KW-0808">Transferase</keyword>
<protein>
    <recommendedName>
        <fullName>Uridine kinase</fullName>
        <ecNumber>2.7.1.48</ecNumber>
    </recommendedName>
    <alternativeName>
        <fullName>Cytidine monophosphokinase</fullName>
    </alternativeName>
    <alternativeName>
        <fullName>Uridine monophosphokinase</fullName>
    </alternativeName>
</protein>
<gene>
    <name type="primary">udk</name>
    <name type="ordered locus">c2593</name>
</gene>